<name>RM11_HUMAN</name>
<evidence type="ECO:0000255" key="1"/>
<evidence type="ECO:0000269" key="2">
    <source>
    </source>
</evidence>
<evidence type="ECO:0000269" key="3">
    <source>
    </source>
</evidence>
<evidence type="ECO:0000269" key="4">
    <source>
    </source>
</evidence>
<evidence type="ECO:0000269" key="5">
    <source>
    </source>
</evidence>
<evidence type="ECO:0000303" key="6">
    <source>
    </source>
</evidence>
<evidence type="ECO:0000303" key="7">
    <source>
    </source>
</evidence>
<evidence type="ECO:0000305" key="8"/>
<evidence type="ECO:0007744" key="9">
    <source>
        <dbReference type="PDB" id="3J7Y"/>
    </source>
</evidence>
<evidence type="ECO:0007744" key="10">
    <source>
        <dbReference type="PDB" id="3J9M"/>
    </source>
</evidence>
<evidence type="ECO:0007744" key="11">
    <source>
        <dbReference type="PDB" id="5OOL"/>
    </source>
</evidence>
<evidence type="ECO:0007744" key="12">
    <source>
        <dbReference type="PDB" id="5OOM"/>
    </source>
</evidence>
<evidence type="ECO:0007829" key="13">
    <source>
        <dbReference type="PDB" id="3J7Y"/>
    </source>
</evidence>
<evidence type="ECO:0007829" key="14">
    <source>
        <dbReference type="PDB" id="7OF0"/>
    </source>
</evidence>
<evidence type="ECO:0007829" key="15">
    <source>
        <dbReference type="PDB" id="8QU5"/>
    </source>
</evidence>
<gene>
    <name type="primary">MRPL11</name>
    <name type="ORF">CGI-113</name>
</gene>
<feature type="transit peptide" description="Mitochondrion" evidence="1">
    <location>
        <begin position="1"/>
        <end status="unknown"/>
    </location>
</feature>
<feature type="chain" id="PRO_0000030443" description="Large ribosomal subunit protein uL11m">
    <location>
        <begin status="unknown"/>
        <end position="192"/>
    </location>
</feature>
<feature type="splice variant" id="VSP_041077" description="In isoform 2." evidence="6">
    <location>
        <begin position="16"/>
        <end position="41"/>
    </location>
</feature>
<feature type="splice variant" id="VSP_045237" description="In isoform 3." evidence="6">
    <original>DLSSEELAAFQKERAIFLAAQKEADLAAQEEAAKK</original>
    <variation>ERCSANVLRNGKISMKDPSGRSSV</variation>
    <location>
        <begin position="158"/>
        <end position="192"/>
    </location>
</feature>
<feature type="sequence conflict" description="In Ref. 6; BM554886." evidence="8" ref="6">
    <original>T</original>
    <variation>I</variation>
    <location>
        <position position="68"/>
    </location>
</feature>
<feature type="strand" evidence="14">
    <location>
        <begin position="19"/>
        <end position="22"/>
    </location>
</feature>
<feature type="strand" evidence="14">
    <location>
        <begin position="25"/>
        <end position="27"/>
    </location>
</feature>
<feature type="turn" evidence="14">
    <location>
        <begin position="33"/>
        <end position="35"/>
    </location>
</feature>
<feature type="helix" evidence="14">
    <location>
        <begin position="36"/>
        <end position="40"/>
    </location>
</feature>
<feature type="helix" evidence="14">
    <location>
        <begin position="46"/>
        <end position="59"/>
    </location>
</feature>
<feature type="strand" evidence="14">
    <location>
        <begin position="62"/>
        <end position="65"/>
    </location>
</feature>
<feature type="strand" evidence="14">
    <location>
        <begin position="68"/>
        <end position="71"/>
    </location>
</feature>
<feature type="strand" evidence="13">
    <location>
        <begin position="74"/>
        <end position="76"/>
    </location>
</feature>
<feature type="helix" evidence="14">
    <location>
        <begin position="88"/>
        <end position="94"/>
    </location>
</feature>
<feature type="strand" evidence="14">
    <location>
        <begin position="102"/>
        <end position="106"/>
    </location>
</feature>
<feature type="strand" evidence="14">
    <location>
        <begin position="110"/>
        <end position="113"/>
    </location>
</feature>
<feature type="helix" evidence="14">
    <location>
        <begin position="114"/>
        <end position="122"/>
    </location>
</feature>
<feature type="turn" evidence="14">
    <location>
        <begin position="123"/>
        <end position="126"/>
    </location>
</feature>
<feature type="strand" evidence="15">
    <location>
        <begin position="128"/>
        <end position="130"/>
    </location>
</feature>
<feature type="helix" evidence="14">
    <location>
        <begin position="137"/>
        <end position="150"/>
    </location>
</feature>
<feature type="strand" evidence="14">
    <location>
        <begin position="153"/>
        <end position="156"/>
    </location>
</feature>
<feature type="sequence conflict" description="In Ref. 6; BM554886." evidence="8" ref="6">
    <original>V</original>
    <variation>L</variation>
    <location sequence="Q9Y3B7-3">
        <position position="181"/>
    </location>
</feature>
<sequence length="192" mass="20683">MSKLGRAARGLRKPEVGGVIRAIVRAGLAMPGPPLGPVLGQRGVSINQFCKEFNERTKDIKEGIPLPTKILVKPDRTFEIKIGQPTVSYFLKAAAGIEKGARQTGKEVAGLVTLKHVYEIARIKAQDEAFALQDVPLSSVVRSIIGSARSLGIRVVKDLSSEELAAFQKERAIFLAAQKEADLAAQEEAAKK</sequence>
<dbReference type="EMBL" id="AB049638">
    <property type="protein sequence ID" value="BAB40843.1"/>
    <property type="molecule type" value="mRNA"/>
</dbReference>
<dbReference type="EMBL" id="AF151871">
    <property type="protein sequence ID" value="AAD34108.1"/>
    <property type="molecule type" value="mRNA"/>
</dbReference>
<dbReference type="EMBL" id="AK290084">
    <property type="protein sequence ID" value="BAF82773.1"/>
    <property type="molecule type" value="mRNA"/>
</dbReference>
<dbReference type="EMBL" id="AP002748">
    <property type="status" value="NOT_ANNOTATED_CDS"/>
    <property type="molecule type" value="Genomic_DNA"/>
</dbReference>
<dbReference type="EMBL" id="CH471076">
    <property type="protein sequence ID" value="EAW74528.1"/>
    <property type="molecule type" value="Genomic_DNA"/>
</dbReference>
<dbReference type="EMBL" id="CH471076">
    <property type="protein sequence ID" value="EAW74529.1"/>
    <property type="molecule type" value="Genomic_DNA"/>
</dbReference>
<dbReference type="EMBL" id="CH471076">
    <property type="protein sequence ID" value="EAW74531.1"/>
    <property type="molecule type" value="Genomic_DNA"/>
</dbReference>
<dbReference type="EMBL" id="BC005002">
    <property type="protein sequence ID" value="AAH05002.1"/>
    <property type="molecule type" value="mRNA"/>
</dbReference>
<dbReference type="EMBL" id="BC108277">
    <property type="protein sequence ID" value="AAI08278.1"/>
    <property type="molecule type" value="mRNA"/>
</dbReference>
<dbReference type="EMBL" id="BM554886">
    <property type="status" value="NOT_ANNOTATED_CDS"/>
    <property type="molecule type" value="mRNA"/>
</dbReference>
<dbReference type="EMBL" id="AB051338">
    <property type="protein sequence ID" value="BAB54928.1"/>
    <property type="molecule type" value="Genomic_DNA"/>
</dbReference>
<dbReference type="CCDS" id="CCDS44655.1">
    <molecule id="Q9Y3B7-2"/>
</dbReference>
<dbReference type="CCDS" id="CCDS8139.1">
    <molecule id="Q9Y3B7-1"/>
</dbReference>
<dbReference type="CCDS" id="CCDS8140.1">
    <molecule id="Q9Y3B7-3"/>
</dbReference>
<dbReference type="RefSeq" id="NP_057134.1">
    <molecule id="Q9Y3B7-1"/>
    <property type="nucleotide sequence ID" value="NM_016050.5"/>
</dbReference>
<dbReference type="RefSeq" id="NP_733934.1">
    <molecule id="Q9Y3B7-2"/>
    <property type="nucleotide sequence ID" value="NM_170738.4"/>
</dbReference>
<dbReference type="RefSeq" id="NP_733935.1">
    <molecule id="Q9Y3B7-3"/>
    <property type="nucleotide sequence ID" value="NM_170739.4"/>
</dbReference>
<dbReference type="PDB" id="3J7Y">
    <property type="method" value="EM"/>
    <property type="resolution" value="3.40 A"/>
    <property type="chains" value="J=1-192"/>
</dbReference>
<dbReference type="PDB" id="3J9M">
    <property type="method" value="EM"/>
    <property type="resolution" value="3.50 A"/>
    <property type="chains" value="J=1-192"/>
</dbReference>
<dbReference type="PDB" id="5OOL">
    <property type="method" value="EM"/>
    <property type="resolution" value="3.06 A"/>
    <property type="chains" value="J=1-192"/>
</dbReference>
<dbReference type="PDB" id="5OOM">
    <property type="method" value="EM"/>
    <property type="resolution" value="3.03 A"/>
    <property type="chains" value="J=1-192"/>
</dbReference>
<dbReference type="PDB" id="6I9R">
    <property type="method" value="EM"/>
    <property type="resolution" value="3.90 A"/>
    <property type="chains" value="J=1-192"/>
</dbReference>
<dbReference type="PDB" id="6NU2">
    <property type="method" value="EM"/>
    <property type="resolution" value="3.90 A"/>
    <property type="chains" value="J=18-157"/>
</dbReference>
<dbReference type="PDB" id="6NU3">
    <property type="method" value="EM"/>
    <property type="resolution" value="4.40 A"/>
    <property type="chains" value="J=1-192"/>
</dbReference>
<dbReference type="PDB" id="6VLZ">
    <property type="method" value="EM"/>
    <property type="resolution" value="2.97 A"/>
    <property type="chains" value="J=1-192"/>
</dbReference>
<dbReference type="PDB" id="6VMI">
    <property type="method" value="EM"/>
    <property type="resolution" value="2.96 A"/>
    <property type="chains" value="J=1-192"/>
</dbReference>
<dbReference type="PDB" id="6ZM5">
    <property type="method" value="EM"/>
    <property type="resolution" value="2.89 A"/>
    <property type="chains" value="J=1-192"/>
</dbReference>
<dbReference type="PDB" id="6ZM6">
    <property type="method" value="EM"/>
    <property type="resolution" value="2.59 A"/>
    <property type="chains" value="J=1-192"/>
</dbReference>
<dbReference type="PDB" id="6ZS9">
    <property type="method" value="EM"/>
    <property type="resolution" value="4.00 A"/>
    <property type="chains" value="XJ=1-192"/>
</dbReference>
<dbReference type="PDB" id="6ZSA">
    <property type="method" value="EM"/>
    <property type="resolution" value="4.00 A"/>
    <property type="chains" value="XJ=1-192"/>
</dbReference>
<dbReference type="PDB" id="6ZSB">
    <property type="method" value="EM"/>
    <property type="resolution" value="4.50 A"/>
    <property type="chains" value="XJ=1-192"/>
</dbReference>
<dbReference type="PDB" id="6ZSC">
    <property type="method" value="EM"/>
    <property type="resolution" value="3.50 A"/>
    <property type="chains" value="XJ=1-192"/>
</dbReference>
<dbReference type="PDB" id="6ZSD">
    <property type="method" value="EM"/>
    <property type="resolution" value="3.70 A"/>
    <property type="chains" value="XJ=1-192"/>
</dbReference>
<dbReference type="PDB" id="6ZSE">
    <property type="method" value="EM"/>
    <property type="resolution" value="5.00 A"/>
    <property type="chains" value="XJ=1-192"/>
</dbReference>
<dbReference type="PDB" id="6ZSG">
    <property type="method" value="EM"/>
    <property type="resolution" value="4.00 A"/>
    <property type="chains" value="XJ=1-192"/>
</dbReference>
<dbReference type="PDB" id="7A5F">
    <property type="method" value="EM"/>
    <property type="resolution" value="4.40 A"/>
    <property type="chains" value="J3=1-192"/>
</dbReference>
<dbReference type="PDB" id="7A5G">
    <property type="method" value="EM"/>
    <property type="resolution" value="4.33 A"/>
    <property type="chains" value="J3=1-192"/>
</dbReference>
<dbReference type="PDB" id="7A5H">
    <property type="method" value="EM"/>
    <property type="resolution" value="3.30 A"/>
    <property type="chains" value="J=1-192"/>
</dbReference>
<dbReference type="PDB" id="7A5I">
    <property type="method" value="EM"/>
    <property type="resolution" value="3.70 A"/>
    <property type="chains" value="J3=1-192"/>
</dbReference>
<dbReference type="PDB" id="7A5J">
    <property type="method" value="EM"/>
    <property type="resolution" value="3.10 A"/>
    <property type="chains" value="J=1-192"/>
</dbReference>
<dbReference type="PDB" id="7A5K">
    <property type="method" value="EM"/>
    <property type="resolution" value="3.70 A"/>
    <property type="chains" value="J3=1-192"/>
</dbReference>
<dbReference type="PDB" id="7L08">
    <property type="method" value="EM"/>
    <property type="resolution" value="3.49 A"/>
    <property type="chains" value="J=1-192"/>
</dbReference>
<dbReference type="PDB" id="7L20">
    <property type="method" value="EM"/>
    <property type="resolution" value="3.15 A"/>
    <property type="chains" value="J=1-192"/>
</dbReference>
<dbReference type="PDB" id="7O9K">
    <property type="method" value="EM"/>
    <property type="resolution" value="3.10 A"/>
    <property type="chains" value="J=1-192"/>
</dbReference>
<dbReference type="PDB" id="7O9M">
    <property type="method" value="EM"/>
    <property type="resolution" value="2.50 A"/>
    <property type="chains" value="J=1-192"/>
</dbReference>
<dbReference type="PDB" id="7ODR">
    <property type="method" value="EM"/>
    <property type="resolution" value="2.90 A"/>
    <property type="chains" value="J=1-192"/>
</dbReference>
<dbReference type="PDB" id="7ODS">
    <property type="method" value="EM"/>
    <property type="resolution" value="3.10 A"/>
    <property type="chains" value="J=1-192"/>
</dbReference>
<dbReference type="PDB" id="7ODT">
    <property type="method" value="EM"/>
    <property type="resolution" value="3.10 A"/>
    <property type="chains" value="J=1-192"/>
</dbReference>
<dbReference type="PDB" id="7OF0">
    <property type="method" value="EM"/>
    <property type="resolution" value="2.20 A"/>
    <property type="chains" value="J=1-192"/>
</dbReference>
<dbReference type="PDB" id="7OF2">
    <property type="method" value="EM"/>
    <property type="resolution" value="2.70 A"/>
    <property type="chains" value="J=1-192"/>
</dbReference>
<dbReference type="PDB" id="7OF3">
    <property type="method" value="EM"/>
    <property type="resolution" value="2.70 A"/>
    <property type="chains" value="J=1-192"/>
</dbReference>
<dbReference type="PDB" id="7OF4">
    <property type="method" value="EM"/>
    <property type="resolution" value="2.70 A"/>
    <property type="chains" value="J=1-192"/>
</dbReference>
<dbReference type="PDB" id="7OF5">
    <property type="method" value="EM"/>
    <property type="resolution" value="2.90 A"/>
    <property type="chains" value="J=1-192"/>
</dbReference>
<dbReference type="PDB" id="7OF6">
    <property type="method" value="EM"/>
    <property type="resolution" value="2.60 A"/>
    <property type="chains" value="J=1-192"/>
</dbReference>
<dbReference type="PDB" id="7OF7">
    <property type="method" value="EM"/>
    <property type="resolution" value="2.50 A"/>
    <property type="chains" value="J=1-192"/>
</dbReference>
<dbReference type="PDB" id="7OG4">
    <property type="method" value="EM"/>
    <property type="resolution" value="3.80 A"/>
    <property type="chains" value="XJ=1-192"/>
</dbReference>
<dbReference type="PDB" id="7OI6">
    <property type="method" value="EM"/>
    <property type="resolution" value="5.70 A"/>
    <property type="chains" value="J=1-192"/>
</dbReference>
<dbReference type="PDB" id="7OI7">
    <property type="method" value="EM"/>
    <property type="resolution" value="3.50 A"/>
    <property type="chains" value="J=1-192"/>
</dbReference>
<dbReference type="PDB" id="7OI8">
    <property type="method" value="EM"/>
    <property type="resolution" value="3.50 A"/>
    <property type="chains" value="J=1-192"/>
</dbReference>
<dbReference type="PDB" id="7OI9">
    <property type="method" value="EM"/>
    <property type="resolution" value="3.30 A"/>
    <property type="chains" value="J=1-192"/>
</dbReference>
<dbReference type="PDB" id="7OIA">
    <property type="method" value="EM"/>
    <property type="resolution" value="3.20 A"/>
    <property type="chains" value="J=1-192"/>
</dbReference>
<dbReference type="PDB" id="7OIB">
    <property type="method" value="EM"/>
    <property type="resolution" value="3.30 A"/>
    <property type="chains" value="J=1-192"/>
</dbReference>
<dbReference type="PDB" id="7OIC">
    <property type="method" value="EM"/>
    <property type="resolution" value="3.10 A"/>
    <property type="chains" value="J=1-192"/>
</dbReference>
<dbReference type="PDB" id="7OID">
    <property type="method" value="EM"/>
    <property type="resolution" value="3.70 A"/>
    <property type="chains" value="J=1-192"/>
</dbReference>
<dbReference type="PDB" id="7OIE">
    <property type="method" value="EM"/>
    <property type="resolution" value="3.50 A"/>
    <property type="chains" value="J=1-192"/>
</dbReference>
<dbReference type="PDB" id="7PD3">
    <property type="method" value="EM"/>
    <property type="resolution" value="3.40 A"/>
    <property type="chains" value="J=1-192"/>
</dbReference>
<dbReference type="PDB" id="7PO4">
    <property type="method" value="EM"/>
    <property type="resolution" value="2.56 A"/>
    <property type="chains" value="J=1-192"/>
</dbReference>
<dbReference type="PDB" id="7QI4">
    <property type="method" value="EM"/>
    <property type="resolution" value="2.21 A"/>
    <property type="chains" value="J=1-192"/>
</dbReference>
<dbReference type="PDB" id="7QI5">
    <property type="method" value="EM"/>
    <property type="resolution" value="2.63 A"/>
    <property type="chains" value="J=1-192"/>
</dbReference>
<dbReference type="PDB" id="7QI6">
    <property type="method" value="EM"/>
    <property type="resolution" value="2.98 A"/>
    <property type="chains" value="J=1-192"/>
</dbReference>
<dbReference type="PDB" id="8ANY">
    <property type="method" value="EM"/>
    <property type="resolution" value="2.85 A"/>
    <property type="chains" value="J=1-192"/>
</dbReference>
<dbReference type="PDB" id="8K2A">
    <property type="method" value="EM"/>
    <property type="resolution" value="2.90 A"/>
    <property type="chains" value="LK=1-192"/>
</dbReference>
<dbReference type="PDB" id="8K2B">
    <property type="method" value="EM"/>
    <property type="resolution" value="3.40 A"/>
    <property type="chains" value="LK=1-192"/>
</dbReference>
<dbReference type="PDB" id="8OIR">
    <property type="method" value="EM"/>
    <property type="resolution" value="3.10 A"/>
    <property type="chains" value="BQ=1-192"/>
</dbReference>
<dbReference type="PDB" id="8OIT">
    <property type="method" value="EM"/>
    <property type="resolution" value="2.90 A"/>
    <property type="chains" value="BQ=1-192"/>
</dbReference>
<dbReference type="PDB" id="8PK0">
    <property type="method" value="EM"/>
    <property type="resolution" value="3.03 A"/>
    <property type="chains" value="J=1-192"/>
</dbReference>
<dbReference type="PDB" id="8QSJ">
    <property type="method" value="EM"/>
    <property type="resolution" value="3.00 A"/>
    <property type="chains" value="J=1-192"/>
</dbReference>
<dbReference type="PDB" id="8QU1">
    <property type="method" value="EM"/>
    <property type="resolution" value="2.74 A"/>
    <property type="chains" value="J=1-192"/>
</dbReference>
<dbReference type="PDB" id="8QU5">
    <property type="method" value="EM"/>
    <property type="resolution" value="2.42 A"/>
    <property type="chains" value="J=1-192"/>
</dbReference>
<dbReference type="PDB" id="8RRI">
    <property type="method" value="EM"/>
    <property type="resolution" value="2.40 A"/>
    <property type="chains" value="J=1-192"/>
</dbReference>
<dbReference type="PDB" id="8XT0">
    <property type="method" value="EM"/>
    <property type="resolution" value="3.20 A"/>
    <property type="chains" value="LK=1-192"/>
</dbReference>
<dbReference type="PDB" id="8XT1">
    <property type="method" value="EM"/>
    <property type="resolution" value="3.10 A"/>
    <property type="chains" value="LK=1-192"/>
</dbReference>
<dbReference type="PDB" id="8XT2">
    <property type="method" value="EM"/>
    <property type="resolution" value="3.30 A"/>
    <property type="chains" value="LK=1-192"/>
</dbReference>
<dbReference type="PDB" id="8XT3">
    <property type="method" value="EM"/>
    <property type="resolution" value="3.10 A"/>
    <property type="chains" value="LK=1-192"/>
</dbReference>
<dbReference type="PDBsum" id="3J7Y"/>
<dbReference type="PDBsum" id="3J9M"/>
<dbReference type="PDBsum" id="5OOL"/>
<dbReference type="PDBsum" id="5OOM"/>
<dbReference type="PDBsum" id="6I9R"/>
<dbReference type="PDBsum" id="6NU2"/>
<dbReference type="PDBsum" id="6NU3"/>
<dbReference type="PDBsum" id="6VLZ"/>
<dbReference type="PDBsum" id="6VMI"/>
<dbReference type="PDBsum" id="6ZM5"/>
<dbReference type="PDBsum" id="6ZM6"/>
<dbReference type="PDBsum" id="6ZS9"/>
<dbReference type="PDBsum" id="6ZSA"/>
<dbReference type="PDBsum" id="6ZSB"/>
<dbReference type="PDBsum" id="6ZSC"/>
<dbReference type="PDBsum" id="6ZSD"/>
<dbReference type="PDBsum" id="6ZSE"/>
<dbReference type="PDBsum" id="6ZSG"/>
<dbReference type="PDBsum" id="7A5F"/>
<dbReference type="PDBsum" id="7A5G"/>
<dbReference type="PDBsum" id="7A5H"/>
<dbReference type="PDBsum" id="7A5I"/>
<dbReference type="PDBsum" id="7A5J"/>
<dbReference type="PDBsum" id="7A5K"/>
<dbReference type="PDBsum" id="7L08"/>
<dbReference type="PDBsum" id="7L20"/>
<dbReference type="PDBsum" id="7O9K"/>
<dbReference type="PDBsum" id="7O9M"/>
<dbReference type="PDBsum" id="7ODR"/>
<dbReference type="PDBsum" id="7ODS"/>
<dbReference type="PDBsum" id="7ODT"/>
<dbReference type="PDBsum" id="7OF0"/>
<dbReference type="PDBsum" id="7OF2"/>
<dbReference type="PDBsum" id="7OF3"/>
<dbReference type="PDBsum" id="7OF4"/>
<dbReference type="PDBsum" id="7OF5"/>
<dbReference type="PDBsum" id="7OF6"/>
<dbReference type="PDBsum" id="7OF7"/>
<dbReference type="PDBsum" id="7OG4"/>
<dbReference type="PDBsum" id="7OI6"/>
<dbReference type="PDBsum" id="7OI7"/>
<dbReference type="PDBsum" id="7OI8"/>
<dbReference type="PDBsum" id="7OI9"/>
<dbReference type="PDBsum" id="7OIA"/>
<dbReference type="PDBsum" id="7OIB"/>
<dbReference type="PDBsum" id="7OIC"/>
<dbReference type="PDBsum" id="7OID"/>
<dbReference type="PDBsum" id="7OIE"/>
<dbReference type="PDBsum" id="7PD3"/>
<dbReference type="PDBsum" id="7PO4"/>
<dbReference type="PDBsum" id="7QI4"/>
<dbReference type="PDBsum" id="7QI5"/>
<dbReference type="PDBsum" id="7QI6"/>
<dbReference type="PDBsum" id="8ANY"/>
<dbReference type="PDBsum" id="8K2A"/>
<dbReference type="PDBsum" id="8K2B"/>
<dbReference type="PDBsum" id="8OIR"/>
<dbReference type="PDBsum" id="8OIT"/>
<dbReference type="PDBsum" id="8PK0"/>
<dbReference type="PDBsum" id="8QSJ"/>
<dbReference type="PDBsum" id="8QU1"/>
<dbReference type="PDBsum" id="8QU5"/>
<dbReference type="PDBsum" id="8RRI"/>
<dbReference type="PDBsum" id="8XT0"/>
<dbReference type="PDBsum" id="8XT1"/>
<dbReference type="PDBsum" id="8XT2"/>
<dbReference type="PDBsum" id="8XT3"/>
<dbReference type="EMDB" id="EMD-0514"/>
<dbReference type="EMDB" id="EMD-0515"/>
<dbReference type="EMDB" id="EMD-11278"/>
<dbReference type="EMDB" id="EMD-11279"/>
<dbReference type="EMDB" id="EMD-11390"/>
<dbReference type="EMDB" id="EMD-11391"/>
<dbReference type="EMDB" id="EMD-11392"/>
<dbReference type="EMDB" id="EMD-11393"/>
<dbReference type="EMDB" id="EMD-11394"/>
<dbReference type="EMDB" id="EMD-11395"/>
<dbReference type="EMDB" id="EMD-11397"/>
<dbReference type="EMDB" id="EMD-11641"/>
<dbReference type="EMDB" id="EMD-11642"/>
<dbReference type="EMDB" id="EMD-11643"/>
<dbReference type="EMDB" id="EMD-11644"/>
<dbReference type="EMDB" id="EMD-11645"/>
<dbReference type="EMDB" id="EMD-11646"/>
<dbReference type="EMDB" id="EMD-12763"/>
<dbReference type="EMDB" id="EMD-12764"/>
<dbReference type="EMDB" id="EMD-12845"/>
<dbReference type="EMDB" id="EMD-12846"/>
<dbReference type="EMDB" id="EMD-12847"/>
<dbReference type="EMDB" id="EMD-12865"/>
<dbReference type="EMDB" id="EMD-12867"/>
<dbReference type="EMDB" id="EMD-12868"/>
<dbReference type="EMDB" id="EMD-12869"/>
<dbReference type="EMDB" id="EMD-12870"/>
<dbReference type="EMDB" id="EMD-12871"/>
<dbReference type="EMDB" id="EMD-12872"/>
<dbReference type="EMDB" id="EMD-12877"/>
<dbReference type="EMDB" id="EMD-12919"/>
<dbReference type="EMDB" id="EMD-12920"/>
<dbReference type="EMDB" id="EMD-12921"/>
<dbReference type="EMDB" id="EMD-12922"/>
<dbReference type="EMDB" id="EMD-12923"/>
<dbReference type="EMDB" id="EMD-12924"/>
<dbReference type="EMDB" id="EMD-12925"/>
<dbReference type="EMDB" id="EMD-12926"/>
<dbReference type="EMDB" id="EMD-12927"/>
<dbReference type="EMDB" id="EMD-13329"/>
<dbReference type="EMDB" id="EMD-13562"/>
<dbReference type="EMDB" id="EMD-13980"/>
<dbReference type="EMDB" id="EMD-13981"/>
<dbReference type="EMDB" id="EMD-13982"/>
<dbReference type="EMDB" id="EMD-15544"/>
<dbReference type="EMDB" id="EMD-16897"/>
<dbReference type="EMDB" id="EMD-16899"/>
<dbReference type="EMDB" id="EMD-17719"/>
<dbReference type="EMDB" id="EMD-19460"/>
<dbReference type="EMDB" id="EMD-21233"/>
<dbReference type="EMDB" id="EMD-21242"/>
<dbReference type="EMDB" id="EMD-23096"/>
<dbReference type="EMDB" id="EMD-23121"/>
<dbReference type="EMDB" id="EMD-36836"/>
<dbReference type="EMDB" id="EMD-36837"/>
<dbReference type="EMDB" id="EMD-3842"/>
<dbReference type="EMDB" id="EMD-3843"/>
<dbReference type="EMDB" id="EMD-38632"/>
<dbReference type="EMDB" id="EMD-38633"/>
<dbReference type="EMDB" id="EMD-38634"/>
<dbReference type="EMDB" id="EMD-38635"/>
<dbReference type="EMDB" id="EMD-4434"/>
<dbReference type="SMR" id="Q9Y3B7"/>
<dbReference type="BioGRID" id="122369">
    <property type="interactions" value="420"/>
</dbReference>
<dbReference type="ComplexPortal" id="CPX-5226">
    <property type="entry name" value="39S mitochondrial large ribosomal subunit"/>
</dbReference>
<dbReference type="CORUM" id="Q9Y3B7"/>
<dbReference type="FunCoup" id="Q9Y3B7">
    <property type="interactions" value="2152"/>
</dbReference>
<dbReference type="IntAct" id="Q9Y3B7">
    <property type="interactions" value="133"/>
</dbReference>
<dbReference type="MINT" id="Q9Y3B7"/>
<dbReference type="STRING" id="9606.ENSP00000308897"/>
<dbReference type="GlyGen" id="Q9Y3B7">
    <property type="glycosylation" value="1 site, 1 O-linked glycan (1 site)"/>
</dbReference>
<dbReference type="iPTMnet" id="Q9Y3B7"/>
<dbReference type="PhosphoSitePlus" id="Q9Y3B7"/>
<dbReference type="SwissPalm" id="Q9Y3B7"/>
<dbReference type="BioMuta" id="MRPL11"/>
<dbReference type="DMDM" id="22001931"/>
<dbReference type="jPOST" id="Q9Y3B7"/>
<dbReference type="MassIVE" id="Q9Y3B7"/>
<dbReference type="PaxDb" id="9606-ENSP00000308897"/>
<dbReference type="PeptideAtlas" id="Q9Y3B7"/>
<dbReference type="ProteomicsDB" id="1491"/>
<dbReference type="ProteomicsDB" id="86004">
    <molecule id="Q9Y3B7-1"/>
</dbReference>
<dbReference type="ProteomicsDB" id="86005">
    <molecule id="Q9Y3B7-2"/>
</dbReference>
<dbReference type="Pumba" id="Q9Y3B7"/>
<dbReference type="TopDownProteomics" id="Q9Y3B7-1">
    <molecule id="Q9Y3B7-1"/>
</dbReference>
<dbReference type="TopDownProteomics" id="Q9Y3B7-2">
    <molecule id="Q9Y3B7-2"/>
</dbReference>
<dbReference type="Antibodypedia" id="30159">
    <property type="antibodies" value="310 antibodies from 30 providers"/>
</dbReference>
<dbReference type="DNASU" id="65003"/>
<dbReference type="Ensembl" id="ENST00000310999.11">
    <molecule id="Q9Y3B7-1"/>
    <property type="protein sequence ID" value="ENSP00000308897.7"/>
    <property type="gene ID" value="ENSG00000174547.13"/>
</dbReference>
<dbReference type="Ensembl" id="ENST00000329819.4">
    <molecule id="Q9Y3B7-3"/>
    <property type="protein sequence ID" value="ENSP00000329630.4"/>
    <property type="gene ID" value="ENSG00000174547.13"/>
</dbReference>
<dbReference type="Ensembl" id="ENST00000430466.6">
    <molecule id="Q9Y3B7-2"/>
    <property type="protein sequence ID" value="ENSP00000415356.2"/>
    <property type="gene ID" value="ENSG00000174547.13"/>
</dbReference>
<dbReference type="GeneID" id="65003"/>
<dbReference type="KEGG" id="hsa:65003"/>
<dbReference type="MANE-Select" id="ENST00000310999.11">
    <property type="protein sequence ID" value="ENSP00000308897.7"/>
    <property type="RefSeq nucleotide sequence ID" value="NM_016050.5"/>
    <property type="RefSeq protein sequence ID" value="NP_057134.1"/>
</dbReference>
<dbReference type="UCSC" id="uc001ohy.5">
    <molecule id="Q9Y3B7-1"/>
    <property type="organism name" value="human"/>
</dbReference>
<dbReference type="AGR" id="HGNC:14042"/>
<dbReference type="CTD" id="65003"/>
<dbReference type="DisGeNET" id="65003"/>
<dbReference type="GeneCards" id="MRPL11"/>
<dbReference type="HGNC" id="HGNC:14042">
    <property type="gene designation" value="MRPL11"/>
</dbReference>
<dbReference type="HPA" id="ENSG00000174547">
    <property type="expression patterns" value="Low tissue specificity"/>
</dbReference>
<dbReference type="MIM" id="611826">
    <property type="type" value="gene"/>
</dbReference>
<dbReference type="neXtProt" id="NX_Q9Y3B7"/>
<dbReference type="OpenTargets" id="ENSG00000174547"/>
<dbReference type="PharmGKB" id="PA30940"/>
<dbReference type="VEuPathDB" id="HostDB:ENSG00000174547"/>
<dbReference type="eggNOG" id="KOG3257">
    <property type="taxonomic scope" value="Eukaryota"/>
</dbReference>
<dbReference type="GeneTree" id="ENSGT00390000003153"/>
<dbReference type="HOGENOM" id="CLU_074237_1_1_1"/>
<dbReference type="InParanoid" id="Q9Y3B7"/>
<dbReference type="OMA" id="CKQFNAK"/>
<dbReference type="OrthoDB" id="1091498at2759"/>
<dbReference type="PAN-GO" id="Q9Y3B7">
    <property type="GO annotations" value="4 GO annotations based on evolutionary models"/>
</dbReference>
<dbReference type="PhylomeDB" id="Q9Y3B7"/>
<dbReference type="TreeFam" id="TF313471"/>
<dbReference type="PathwayCommons" id="Q9Y3B7"/>
<dbReference type="Reactome" id="R-HSA-5368286">
    <property type="pathway name" value="Mitochondrial translation initiation"/>
</dbReference>
<dbReference type="Reactome" id="R-HSA-5389840">
    <property type="pathway name" value="Mitochondrial translation elongation"/>
</dbReference>
<dbReference type="Reactome" id="R-HSA-5419276">
    <property type="pathway name" value="Mitochondrial translation termination"/>
</dbReference>
<dbReference type="SignaLink" id="Q9Y3B7"/>
<dbReference type="SIGNOR" id="Q9Y3B7"/>
<dbReference type="BioGRID-ORCS" id="65003">
    <property type="hits" value="183 hits in 1162 CRISPR screens"/>
</dbReference>
<dbReference type="CD-CODE" id="B5B9A610">
    <property type="entry name" value="PML body"/>
</dbReference>
<dbReference type="ChiTaRS" id="MRPL11">
    <property type="organism name" value="human"/>
</dbReference>
<dbReference type="GeneWiki" id="MRPL11"/>
<dbReference type="GenomeRNAi" id="65003"/>
<dbReference type="Pharos" id="Q9Y3B7">
    <property type="development level" value="Tbio"/>
</dbReference>
<dbReference type="PRO" id="PR:Q9Y3B7"/>
<dbReference type="Proteomes" id="UP000005640">
    <property type="component" value="Chromosome 11"/>
</dbReference>
<dbReference type="RNAct" id="Q9Y3B7">
    <property type="molecule type" value="protein"/>
</dbReference>
<dbReference type="Bgee" id="ENSG00000174547">
    <property type="expression patterns" value="Expressed in mucosa of transverse colon and 169 other cell types or tissues"/>
</dbReference>
<dbReference type="ExpressionAtlas" id="Q9Y3B7">
    <property type="expression patterns" value="baseline and differential"/>
</dbReference>
<dbReference type="GO" id="GO:0005743">
    <property type="term" value="C:mitochondrial inner membrane"/>
    <property type="evidence" value="ECO:0000304"/>
    <property type="project" value="Reactome"/>
</dbReference>
<dbReference type="GO" id="GO:0005762">
    <property type="term" value="C:mitochondrial large ribosomal subunit"/>
    <property type="evidence" value="ECO:0000314"/>
    <property type="project" value="UniProtKB"/>
</dbReference>
<dbReference type="GO" id="GO:0005761">
    <property type="term" value="C:mitochondrial ribosome"/>
    <property type="evidence" value="ECO:0000303"/>
    <property type="project" value="UniProtKB"/>
</dbReference>
<dbReference type="GO" id="GO:0005739">
    <property type="term" value="C:mitochondrion"/>
    <property type="evidence" value="ECO:0000314"/>
    <property type="project" value="HPA"/>
</dbReference>
<dbReference type="GO" id="GO:0070180">
    <property type="term" value="F:large ribosomal subunit rRNA binding"/>
    <property type="evidence" value="ECO:0000318"/>
    <property type="project" value="GO_Central"/>
</dbReference>
<dbReference type="GO" id="GO:0003723">
    <property type="term" value="F:RNA binding"/>
    <property type="evidence" value="ECO:0007005"/>
    <property type="project" value="UniProtKB"/>
</dbReference>
<dbReference type="GO" id="GO:0003735">
    <property type="term" value="F:structural constituent of ribosome"/>
    <property type="evidence" value="ECO:0000318"/>
    <property type="project" value="GO_Central"/>
</dbReference>
<dbReference type="GO" id="GO:0032543">
    <property type="term" value="P:mitochondrial translation"/>
    <property type="evidence" value="ECO:0000303"/>
    <property type="project" value="ComplexPortal"/>
</dbReference>
<dbReference type="GO" id="GO:0006412">
    <property type="term" value="P:translation"/>
    <property type="evidence" value="ECO:0000318"/>
    <property type="project" value="GO_Central"/>
</dbReference>
<dbReference type="CDD" id="cd00349">
    <property type="entry name" value="Ribosomal_L11"/>
    <property type="match status" value="1"/>
</dbReference>
<dbReference type="FunFam" id="1.10.10.250:FF:000004">
    <property type="entry name" value="39S ribosomal protein L11, mitochondrial"/>
    <property type="match status" value="1"/>
</dbReference>
<dbReference type="FunFam" id="3.30.1550.10:FF:000003">
    <property type="entry name" value="39S ribosomal protein L11, mitochondrial"/>
    <property type="match status" value="1"/>
</dbReference>
<dbReference type="Gene3D" id="1.10.10.250">
    <property type="entry name" value="Ribosomal protein L11, C-terminal domain"/>
    <property type="match status" value="1"/>
</dbReference>
<dbReference type="Gene3D" id="3.30.1550.10">
    <property type="entry name" value="Ribosomal protein L11/L12, N-terminal domain"/>
    <property type="match status" value="1"/>
</dbReference>
<dbReference type="HAMAP" id="MF_00736">
    <property type="entry name" value="Ribosomal_uL11"/>
    <property type="match status" value="1"/>
</dbReference>
<dbReference type="InterPro" id="IPR000911">
    <property type="entry name" value="Ribosomal_uL11"/>
</dbReference>
<dbReference type="InterPro" id="IPR006519">
    <property type="entry name" value="Ribosomal_uL11_bac-typ"/>
</dbReference>
<dbReference type="InterPro" id="IPR020783">
    <property type="entry name" value="Ribosomal_uL11_C"/>
</dbReference>
<dbReference type="InterPro" id="IPR036769">
    <property type="entry name" value="Ribosomal_uL11_C_sf"/>
</dbReference>
<dbReference type="InterPro" id="IPR020784">
    <property type="entry name" value="Ribosomal_uL11_N"/>
</dbReference>
<dbReference type="InterPro" id="IPR036796">
    <property type="entry name" value="Ribosomal_uL11_N_sf"/>
</dbReference>
<dbReference type="NCBIfam" id="TIGR01632">
    <property type="entry name" value="L11_bact"/>
    <property type="match status" value="1"/>
</dbReference>
<dbReference type="PANTHER" id="PTHR11661">
    <property type="entry name" value="60S RIBOSOMAL PROTEIN L12"/>
    <property type="match status" value="1"/>
</dbReference>
<dbReference type="PANTHER" id="PTHR11661:SF19">
    <property type="entry name" value="LARGE RIBOSOMAL SUBUNIT PROTEIN UL11M"/>
    <property type="match status" value="1"/>
</dbReference>
<dbReference type="Pfam" id="PF00298">
    <property type="entry name" value="Ribosomal_L11"/>
    <property type="match status" value="1"/>
</dbReference>
<dbReference type="Pfam" id="PF03946">
    <property type="entry name" value="Ribosomal_L11_N"/>
    <property type="match status" value="1"/>
</dbReference>
<dbReference type="SMART" id="SM00649">
    <property type="entry name" value="RL11"/>
    <property type="match status" value="1"/>
</dbReference>
<dbReference type="SUPFAM" id="SSF54747">
    <property type="entry name" value="Ribosomal L11/L12e N-terminal domain"/>
    <property type="match status" value="1"/>
</dbReference>
<dbReference type="SUPFAM" id="SSF46906">
    <property type="entry name" value="Ribosomal protein L11, C-terminal domain"/>
    <property type="match status" value="1"/>
</dbReference>
<comment type="subunit">
    <text evidence="3 4 5">Component of the mitochondrial large ribosomal subunit (mt-LSU) (PubMed:25278503, PubMed:25838379, PubMed:28892042). Mature mammalian 55S mitochondrial ribosomes consist of a small (28S) and a large (39S) subunit. The 28S small subunit contains a 12S ribosomal RNA (12S mt-rRNA) and 30 different proteins. The 39S large subunit contains a 16S rRNA (16S mt-rRNA), a copy of mitochondrial valine transfer RNA (mt-tRNA(Val)), which plays an integral structural role, and 52 different proteins.</text>
</comment>
<comment type="interaction">
    <interactant intactId="EBI-5453723">
        <id>Q9Y3B7</id>
    </interactant>
    <interactant intactId="EBI-11522760">
        <id>Q6RW13-2</id>
        <label>AGTRAP</label>
    </interactant>
    <organismsDiffer>false</organismsDiffer>
    <experiments>3</experiments>
</comment>
<comment type="interaction">
    <interactant intactId="EBI-5453723">
        <id>Q9Y3B7</id>
    </interactant>
    <interactant intactId="EBI-1383687">
        <id>Q9UQM7</id>
        <label>CAMK2A</label>
    </interactant>
    <organismsDiffer>false</organismsDiffer>
    <experiments>3</experiments>
</comment>
<comment type="interaction">
    <interactant intactId="EBI-5453723">
        <id>Q9Y3B7</id>
    </interactant>
    <interactant intactId="EBI-1058722">
        <id>Q13554</id>
        <label>CAMK2B</label>
    </interactant>
    <organismsDiffer>false</organismsDiffer>
    <experiments>3</experiments>
</comment>
<comment type="interaction">
    <interactant intactId="EBI-5453723">
        <id>Q9Y3B7</id>
    </interactant>
    <interactant intactId="EBI-11523526">
        <id>Q13554-3</id>
        <label>CAMK2B</label>
    </interactant>
    <organismsDiffer>false</organismsDiffer>
    <experiments>3</experiments>
</comment>
<comment type="interaction">
    <interactant intactId="EBI-5453723">
        <id>Q9Y3B7</id>
    </interactant>
    <interactant intactId="EBI-351018">
        <id>Q13557</id>
        <label>CAMK2D</label>
    </interactant>
    <organismsDiffer>false</organismsDiffer>
    <experiments>5</experiments>
</comment>
<comment type="interaction">
    <interactant intactId="EBI-5453723">
        <id>Q9Y3B7</id>
    </interactant>
    <interactant intactId="EBI-12020154">
        <id>Q13555-5</id>
        <label>CAMK2G</label>
    </interactant>
    <organismsDiffer>false</organismsDiffer>
    <experiments>3</experiments>
</comment>
<comment type="interaction">
    <interactant intactId="EBI-5453723">
        <id>Q9Y3B7</id>
    </interactant>
    <interactant intactId="EBI-2548868">
        <id>P0C7W6</id>
        <label>CCDC172</label>
    </interactant>
    <organismsDiffer>false</organismsDiffer>
    <experiments>3</experiments>
</comment>
<comment type="interaction">
    <interactant intactId="EBI-5453723">
        <id>Q9Y3B7</id>
    </interactant>
    <interactant intactId="EBI-5661036">
        <id>A1L4K1</id>
        <label>FSD2</label>
    </interactant>
    <organismsDiffer>false</organismsDiffer>
    <experiments>6</experiments>
</comment>
<comment type="interaction">
    <interactant intactId="EBI-5453723">
        <id>Q9Y3B7</id>
    </interactant>
    <interactant intactId="EBI-5916454">
        <id>A6NEM1</id>
        <label>GOLGA6L9</label>
    </interactant>
    <organismsDiffer>false</organismsDiffer>
    <experiments>3</experiments>
</comment>
<comment type="interaction">
    <interactant intactId="EBI-5453723">
        <id>Q9Y3B7</id>
    </interactant>
    <interactant intactId="EBI-10178933">
        <id>V9HW27</id>
        <label>HEL-S-101</label>
    </interactant>
    <organismsDiffer>false</organismsDiffer>
    <experiments>3</experiments>
</comment>
<comment type="interaction">
    <interactant intactId="EBI-5453723">
        <id>Q9Y3B7</id>
    </interactant>
    <interactant intactId="EBI-2549423">
        <id>Q6NT76</id>
        <label>HMBOX1</label>
    </interactant>
    <organismsDiffer>false</organismsDiffer>
    <experiments>3</experiments>
</comment>
<comment type="interaction">
    <interactant intactId="EBI-5453723">
        <id>Q9Y3B7</id>
    </interactant>
    <interactant intactId="EBI-10172004">
        <id>Q8IX15-3</id>
        <label>HOMEZ</label>
    </interactant>
    <organismsDiffer>false</organismsDiffer>
    <experiments>3</experiments>
</comment>
<comment type="interaction">
    <interactant intactId="EBI-5453723">
        <id>Q9Y3B7</id>
    </interactant>
    <interactant intactId="EBI-2680803">
        <id>Q96N16</id>
        <label>JAKMIP1</label>
    </interactant>
    <organismsDiffer>false</organismsDiffer>
    <experiments>3</experiments>
</comment>
<comment type="interaction">
    <interactant intactId="EBI-5453723">
        <id>Q9Y3B7</id>
    </interactant>
    <interactant intactId="EBI-752007">
        <id>Q96AA8</id>
        <label>JAKMIP2</label>
    </interactant>
    <organismsDiffer>false</organismsDiffer>
    <experiments>3</experiments>
</comment>
<comment type="interaction">
    <interactant intactId="EBI-5453723">
        <id>Q9Y3B7</id>
    </interactant>
    <interactant intactId="EBI-10171697">
        <id>Q6A162</id>
        <label>KRT40</label>
    </interactant>
    <organismsDiffer>false</organismsDiffer>
    <experiments>3</experiments>
</comment>
<comment type="interaction">
    <interactant intactId="EBI-5453723">
        <id>Q9Y3B7</id>
    </interactant>
    <interactant intactId="EBI-7825248">
        <id>Q6P161</id>
        <label>MRPL54</label>
    </interactant>
    <organismsDiffer>false</organismsDiffer>
    <experiments>3</experiments>
</comment>
<comment type="interaction">
    <interactant intactId="EBI-5453723">
        <id>Q9Y3B7</id>
    </interactant>
    <interactant intactId="EBI-11522433">
        <id>Q5JR59-3</id>
        <label>MTUS2</label>
    </interactant>
    <organismsDiffer>false</organismsDiffer>
    <experiments>5</experiments>
</comment>
<comment type="interaction">
    <interactant intactId="EBI-5453723">
        <id>Q9Y3B7</id>
    </interactant>
    <interactant intactId="EBI-5772890">
        <id>Q13371</id>
        <label>PDCL</label>
    </interactant>
    <organismsDiffer>false</organismsDiffer>
    <experiments>3</experiments>
</comment>
<comment type="interaction">
    <interactant intactId="EBI-5453723">
        <id>Q9Y3B7</id>
    </interactant>
    <interactant intactId="EBI-302345">
        <id>Q8ND90</id>
        <label>PNMA1</label>
    </interactant>
    <organismsDiffer>false</organismsDiffer>
    <experiments>6</experiments>
</comment>
<comment type="interaction">
    <interactant intactId="EBI-5453723">
        <id>Q9Y3B7</id>
    </interactant>
    <interactant intactId="EBI-10232636">
        <id>Q7RTY1</id>
        <label>SLC16A9</label>
    </interactant>
    <organismsDiffer>false</organismsDiffer>
    <experiments>3</experiments>
</comment>
<comment type="interaction">
    <interactant intactId="EBI-5453723">
        <id>Q9Y3B7</id>
    </interactant>
    <interactant intactId="EBI-11956649">
        <id>P32856-2</id>
        <label>STX2</label>
    </interactant>
    <organismsDiffer>false</organismsDiffer>
    <experiments>3</experiments>
</comment>
<comment type="interaction">
    <interactant intactId="EBI-5453723">
        <id>Q9Y3B7</id>
    </interactant>
    <interactant intactId="EBI-529518">
        <id>Q86VP1</id>
        <label>TAX1BP1</label>
    </interactant>
    <organismsDiffer>false</organismsDiffer>
    <experiments>6</experiments>
</comment>
<comment type="interaction">
    <interactant intactId="EBI-5453723">
        <id>Q9Y3B7</id>
    </interactant>
    <interactant intactId="EBI-717422">
        <id>Q12800</id>
        <label>TFCP2</label>
    </interactant>
    <organismsDiffer>false</organismsDiffer>
    <experiments>3</experiments>
</comment>
<comment type="interaction">
    <interactant intactId="EBI-5453723">
        <id>Q9Y3B7</id>
    </interactant>
    <interactant intactId="EBI-1105213">
        <id>Q9UBB9</id>
        <label>TFIP11</label>
    </interactant>
    <organismsDiffer>false</organismsDiffer>
    <experiments>3</experiments>
</comment>
<comment type="interaction">
    <interactant intactId="EBI-5453723">
        <id>Q9Y3B7</id>
    </interactant>
    <interactant intactId="EBI-741515">
        <id>Q9NVV9</id>
        <label>THAP1</label>
    </interactant>
    <organismsDiffer>false</organismsDiffer>
    <experiments>4</experiments>
</comment>
<comment type="interaction">
    <interactant intactId="EBI-5453723">
        <id>Q9Y3B7</id>
    </interactant>
    <interactant intactId="EBI-2799833">
        <id>Q8N1B4</id>
        <label>VPS52</label>
    </interactant>
    <organismsDiffer>false</organismsDiffer>
    <experiments>3</experiments>
</comment>
<comment type="interaction">
    <interactant intactId="EBI-5453723">
        <id>Q9Y3B7</id>
    </interactant>
    <interactant intactId="EBI-10176632">
        <id>O43829</id>
        <label>ZBTB14</label>
    </interactant>
    <organismsDiffer>false</organismsDiffer>
    <experiments>3</experiments>
</comment>
<comment type="interaction">
    <interactant intactId="EBI-5453723">
        <id>Q9Y3B7</id>
    </interactant>
    <interactant intactId="EBI-2515601">
        <id>Q8N680</id>
        <label>ZBTB2</label>
    </interactant>
    <organismsDiffer>false</organismsDiffer>
    <experiments>3</experiments>
</comment>
<comment type="interaction">
    <interactant intactId="EBI-5453723">
        <id>Q9Y3B7</id>
    </interactant>
    <interactant intactId="EBI-742740">
        <id>Q96BR9</id>
        <label>ZBTB8A</label>
    </interactant>
    <organismsDiffer>false</organismsDiffer>
    <experiments>3</experiments>
</comment>
<comment type="interaction">
    <interactant intactId="EBI-5453723">
        <id>Q9Y3B7</id>
    </interactant>
    <interactant intactId="EBI-11962468">
        <id>Q7Z4V0</id>
        <label>ZNF438</label>
    </interactant>
    <organismsDiffer>false</organismsDiffer>
    <experiments>3</experiments>
</comment>
<comment type="interaction">
    <interactant intactId="EBI-5453723">
        <id>Q9Y3B7</id>
    </interactant>
    <interactant intactId="EBI-11035148">
        <id>Q8TF50</id>
        <label>ZNF526</label>
    </interactant>
    <organismsDiffer>false</organismsDiffer>
    <experiments>3</experiments>
</comment>
<comment type="interaction">
    <interactant intactId="EBI-5453723">
        <id>Q9Y3B7</id>
    </interactant>
    <interactant intactId="EBI-6179727">
        <id>PRO_0000038596</id>
        <label>gag</label>
        <dbReference type="UniProtKB" id="P04591"/>
    </interactant>
    <organismsDiffer>true</organismsDiffer>
    <experiments>3</experiments>
</comment>
<comment type="subcellular location">
    <subcellularLocation>
        <location evidence="2 3 4 5">Mitochondrion</location>
    </subcellularLocation>
</comment>
<comment type="alternative products">
    <event type="alternative splicing"/>
    <isoform>
        <id>Q9Y3B7-1</id>
        <name>1</name>
        <sequence type="displayed"/>
    </isoform>
    <isoform>
        <id>Q9Y3B7-2</id>
        <name>2</name>
        <sequence type="described" ref="VSP_041077"/>
    </isoform>
    <isoform>
        <id>Q9Y3B7-3</id>
        <name>3</name>
        <sequence type="described" ref="VSP_045237"/>
    </isoform>
</comment>
<comment type="similarity">
    <text evidence="8">Belongs to the universal ribosomal protein uL11 family.</text>
</comment>
<proteinExistence type="evidence at protein level"/>
<protein>
    <recommendedName>
        <fullName evidence="7">Large ribosomal subunit protein uL11m</fullName>
    </recommendedName>
    <alternativeName>
        <fullName>39S ribosomal protein L11, mitochondrial</fullName>
        <shortName>L11mt</shortName>
        <shortName>MRP-L11</shortName>
    </alternativeName>
</protein>
<keyword id="KW-0002">3D-structure</keyword>
<keyword id="KW-0025">Alternative splicing</keyword>
<keyword id="KW-0496">Mitochondrion</keyword>
<keyword id="KW-1267">Proteomics identification</keyword>
<keyword id="KW-1185">Reference proteome</keyword>
<keyword id="KW-0687">Ribonucleoprotein</keyword>
<keyword id="KW-0689">Ribosomal protein</keyword>
<keyword id="KW-0809">Transit peptide</keyword>
<reference key="1">
    <citation type="journal article" date="2001" name="J. Biol. Chem.">
        <title>Structural compensation for the deficit of rRNA with proteins in the mammalian mitochondrial ribosome. Systematic analysis of protein components of the large ribosomal subunit from mammalian mitochondria.</title>
        <authorList>
            <person name="Suzuki T."/>
            <person name="Terasaki M."/>
            <person name="Takemoto-Hori C."/>
            <person name="Hanada T."/>
            <person name="Ueda T."/>
            <person name="Wada A."/>
            <person name="Watanabe K."/>
        </authorList>
    </citation>
    <scope>NUCLEOTIDE SEQUENCE [MRNA] (ISOFORM 1)</scope>
    <scope>SUBCELLULAR LOCATION</scope>
</reference>
<reference key="2">
    <citation type="journal article" date="2000" name="Genome Res.">
        <title>Identification of novel human genes evolutionarily conserved in Caenorhabditis elegans by comparative proteomics.</title>
        <authorList>
            <person name="Lai C.-H."/>
            <person name="Chou C.-Y."/>
            <person name="Ch'ang L.-Y."/>
            <person name="Liu C.-S."/>
            <person name="Lin W.-C."/>
        </authorList>
    </citation>
    <scope>NUCLEOTIDE SEQUENCE [LARGE SCALE MRNA] (ISOFORM 1)</scope>
</reference>
<reference key="3">
    <citation type="journal article" date="2004" name="Nat. Genet.">
        <title>Complete sequencing and characterization of 21,243 full-length human cDNAs.</title>
        <authorList>
            <person name="Ota T."/>
            <person name="Suzuki Y."/>
            <person name="Nishikawa T."/>
            <person name="Otsuki T."/>
            <person name="Sugiyama T."/>
            <person name="Irie R."/>
            <person name="Wakamatsu A."/>
            <person name="Hayashi K."/>
            <person name="Sato H."/>
            <person name="Nagai K."/>
            <person name="Kimura K."/>
            <person name="Makita H."/>
            <person name="Sekine M."/>
            <person name="Obayashi M."/>
            <person name="Nishi T."/>
            <person name="Shibahara T."/>
            <person name="Tanaka T."/>
            <person name="Ishii S."/>
            <person name="Yamamoto J."/>
            <person name="Saito K."/>
            <person name="Kawai Y."/>
            <person name="Isono Y."/>
            <person name="Nakamura Y."/>
            <person name="Nagahari K."/>
            <person name="Murakami K."/>
            <person name="Yasuda T."/>
            <person name="Iwayanagi T."/>
            <person name="Wagatsuma M."/>
            <person name="Shiratori A."/>
            <person name="Sudo H."/>
            <person name="Hosoiri T."/>
            <person name="Kaku Y."/>
            <person name="Kodaira H."/>
            <person name="Kondo H."/>
            <person name="Sugawara M."/>
            <person name="Takahashi M."/>
            <person name="Kanda K."/>
            <person name="Yokoi T."/>
            <person name="Furuya T."/>
            <person name="Kikkawa E."/>
            <person name="Omura Y."/>
            <person name="Abe K."/>
            <person name="Kamihara K."/>
            <person name="Katsuta N."/>
            <person name="Sato K."/>
            <person name="Tanikawa M."/>
            <person name="Yamazaki M."/>
            <person name="Ninomiya K."/>
            <person name="Ishibashi T."/>
            <person name="Yamashita H."/>
            <person name="Murakawa K."/>
            <person name="Fujimori K."/>
            <person name="Tanai H."/>
            <person name="Kimata M."/>
            <person name="Watanabe M."/>
            <person name="Hiraoka S."/>
            <person name="Chiba Y."/>
            <person name="Ishida S."/>
            <person name="Ono Y."/>
            <person name="Takiguchi S."/>
            <person name="Watanabe S."/>
            <person name="Yosida M."/>
            <person name="Hotuta T."/>
            <person name="Kusano J."/>
            <person name="Kanehori K."/>
            <person name="Takahashi-Fujii A."/>
            <person name="Hara H."/>
            <person name="Tanase T.-O."/>
            <person name="Nomura Y."/>
            <person name="Togiya S."/>
            <person name="Komai F."/>
            <person name="Hara R."/>
            <person name="Takeuchi K."/>
            <person name="Arita M."/>
            <person name="Imose N."/>
            <person name="Musashino K."/>
            <person name="Yuuki H."/>
            <person name="Oshima A."/>
            <person name="Sasaki N."/>
            <person name="Aotsuka S."/>
            <person name="Yoshikawa Y."/>
            <person name="Matsunawa H."/>
            <person name="Ichihara T."/>
            <person name="Shiohata N."/>
            <person name="Sano S."/>
            <person name="Moriya S."/>
            <person name="Momiyama H."/>
            <person name="Satoh N."/>
            <person name="Takami S."/>
            <person name="Terashima Y."/>
            <person name="Suzuki O."/>
            <person name="Nakagawa S."/>
            <person name="Senoh A."/>
            <person name="Mizoguchi H."/>
            <person name="Goto Y."/>
            <person name="Shimizu F."/>
            <person name="Wakebe H."/>
            <person name="Hishigaki H."/>
            <person name="Watanabe T."/>
            <person name="Sugiyama A."/>
            <person name="Takemoto M."/>
            <person name="Kawakami B."/>
            <person name="Yamazaki M."/>
            <person name="Watanabe K."/>
            <person name="Kumagai A."/>
            <person name="Itakura S."/>
            <person name="Fukuzumi Y."/>
            <person name="Fujimori Y."/>
            <person name="Komiyama M."/>
            <person name="Tashiro H."/>
            <person name="Tanigami A."/>
            <person name="Fujiwara T."/>
            <person name="Ono T."/>
            <person name="Yamada K."/>
            <person name="Fujii Y."/>
            <person name="Ozaki K."/>
            <person name="Hirao M."/>
            <person name="Ohmori Y."/>
            <person name="Kawabata A."/>
            <person name="Hikiji T."/>
            <person name="Kobatake N."/>
            <person name="Inagaki H."/>
            <person name="Ikema Y."/>
            <person name="Okamoto S."/>
            <person name="Okitani R."/>
            <person name="Kawakami T."/>
            <person name="Noguchi S."/>
            <person name="Itoh T."/>
            <person name="Shigeta K."/>
            <person name="Senba T."/>
            <person name="Matsumura K."/>
            <person name="Nakajima Y."/>
            <person name="Mizuno T."/>
            <person name="Morinaga M."/>
            <person name="Sasaki M."/>
            <person name="Togashi T."/>
            <person name="Oyama M."/>
            <person name="Hata H."/>
            <person name="Watanabe M."/>
            <person name="Komatsu T."/>
            <person name="Mizushima-Sugano J."/>
            <person name="Satoh T."/>
            <person name="Shirai Y."/>
            <person name="Takahashi Y."/>
            <person name="Nakagawa K."/>
            <person name="Okumura K."/>
            <person name="Nagase T."/>
            <person name="Nomura N."/>
            <person name="Kikuchi H."/>
            <person name="Masuho Y."/>
            <person name="Yamashita R."/>
            <person name="Nakai K."/>
            <person name="Yada T."/>
            <person name="Nakamura Y."/>
            <person name="Ohara O."/>
            <person name="Isogai T."/>
            <person name="Sugano S."/>
        </authorList>
    </citation>
    <scope>NUCLEOTIDE SEQUENCE [LARGE SCALE MRNA] (ISOFORM 1)</scope>
    <source>
        <tissue>Subthalamic nucleus</tissue>
    </source>
</reference>
<reference key="4">
    <citation type="journal article" date="2006" name="Nature">
        <title>Human chromosome 11 DNA sequence and analysis including novel gene identification.</title>
        <authorList>
            <person name="Taylor T.D."/>
            <person name="Noguchi H."/>
            <person name="Totoki Y."/>
            <person name="Toyoda A."/>
            <person name="Kuroki Y."/>
            <person name="Dewar K."/>
            <person name="Lloyd C."/>
            <person name="Itoh T."/>
            <person name="Takeda T."/>
            <person name="Kim D.-W."/>
            <person name="She X."/>
            <person name="Barlow K.F."/>
            <person name="Bloom T."/>
            <person name="Bruford E."/>
            <person name="Chang J.L."/>
            <person name="Cuomo C.A."/>
            <person name="Eichler E."/>
            <person name="FitzGerald M.G."/>
            <person name="Jaffe D.B."/>
            <person name="LaButti K."/>
            <person name="Nicol R."/>
            <person name="Park H.-S."/>
            <person name="Seaman C."/>
            <person name="Sougnez C."/>
            <person name="Yang X."/>
            <person name="Zimmer A.R."/>
            <person name="Zody M.C."/>
            <person name="Birren B.W."/>
            <person name="Nusbaum C."/>
            <person name="Fujiyama A."/>
            <person name="Hattori M."/>
            <person name="Rogers J."/>
            <person name="Lander E.S."/>
            <person name="Sakaki Y."/>
        </authorList>
    </citation>
    <scope>NUCLEOTIDE SEQUENCE [LARGE SCALE GENOMIC DNA]</scope>
</reference>
<reference key="5">
    <citation type="submission" date="2005-07" db="EMBL/GenBank/DDBJ databases">
        <authorList>
            <person name="Mural R.J."/>
            <person name="Istrail S."/>
            <person name="Sutton G.G."/>
            <person name="Florea L."/>
            <person name="Halpern A.L."/>
            <person name="Mobarry C.M."/>
            <person name="Lippert R."/>
            <person name="Walenz B."/>
            <person name="Shatkay H."/>
            <person name="Dew I."/>
            <person name="Miller J.R."/>
            <person name="Flanigan M.J."/>
            <person name="Edwards N.J."/>
            <person name="Bolanos R."/>
            <person name="Fasulo D."/>
            <person name="Halldorsson B.V."/>
            <person name="Hannenhalli S."/>
            <person name="Turner R."/>
            <person name="Yooseph S."/>
            <person name="Lu F."/>
            <person name="Nusskern D.R."/>
            <person name="Shue B.C."/>
            <person name="Zheng X.H."/>
            <person name="Zhong F."/>
            <person name="Delcher A.L."/>
            <person name="Huson D.H."/>
            <person name="Kravitz S.A."/>
            <person name="Mouchard L."/>
            <person name="Reinert K."/>
            <person name="Remington K.A."/>
            <person name="Clark A.G."/>
            <person name="Waterman M.S."/>
            <person name="Eichler E.E."/>
            <person name="Adams M.D."/>
            <person name="Hunkapiller M.W."/>
            <person name="Myers E.W."/>
            <person name="Venter J.C."/>
        </authorList>
    </citation>
    <scope>NUCLEOTIDE SEQUENCE [LARGE SCALE GENOMIC DNA]</scope>
</reference>
<reference key="6">
    <citation type="journal article" date="2004" name="Genome Res.">
        <title>The status, quality, and expansion of the NIH full-length cDNA project: the Mammalian Gene Collection (MGC).</title>
        <authorList>
            <consortium name="The MGC Project Team"/>
        </authorList>
    </citation>
    <scope>NUCLEOTIDE SEQUENCE [LARGE SCALE MRNA] (ISOFORMS 1; 2 AND 3)</scope>
    <source>
        <tissue>Duodenum</tissue>
        <tissue>Lymph</tissue>
        <tissue>Melanoma</tissue>
    </source>
</reference>
<reference key="7">
    <citation type="journal article" date="2001" name="Genomics">
        <title>The human mitochondrial ribosomal protein genes: mapping of 54 genes to the chromosomes and implications for human disorders.</title>
        <authorList>
            <person name="Kenmochi N."/>
            <person name="Suzuki T."/>
            <person name="Uechi T."/>
            <person name="Magoori M."/>
            <person name="Kuniba M."/>
            <person name="Higa S."/>
            <person name="Watanabe K."/>
            <person name="Tanaka T."/>
        </authorList>
    </citation>
    <scope>NUCLEOTIDE SEQUENCE [GENOMIC DNA] OF 81-141 (ISOFORMS 1/2)</scope>
</reference>
<reference key="8">
    <citation type="journal article" date="2011" name="BMC Syst. Biol.">
        <title>Initial characterization of the human central proteome.</title>
        <authorList>
            <person name="Burkard T.R."/>
            <person name="Planyavsky M."/>
            <person name="Kaupe I."/>
            <person name="Breitwieser F.P."/>
            <person name="Buerckstuemmer T."/>
            <person name="Bennett K.L."/>
            <person name="Superti-Furga G."/>
            <person name="Colinge J."/>
        </authorList>
    </citation>
    <scope>IDENTIFICATION BY MASS SPECTROMETRY [LARGE SCALE ANALYSIS]</scope>
</reference>
<reference key="9">
    <citation type="journal article" date="2015" name="Proteomics">
        <title>N-terminome analysis of the human mitochondrial proteome.</title>
        <authorList>
            <person name="Vaca Jacome A.S."/>
            <person name="Rabilloud T."/>
            <person name="Schaeffer-Reiss C."/>
            <person name="Rompais M."/>
            <person name="Ayoub D."/>
            <person name="Lane L."/>
            <person name="Bairoch A."/>
            <person name="Van Dorsselaer A."/>
            <person name="Carapito C."/>
        </authorList>
    </citation>
    <scope>IDENTIFICATION BY MASS SPECTROMETRY [LARGE SCALE ANALYSIS]</scope>
</reference>
<reference evidence="9" key="10">
    <citation type="journal article" date="2014" name="Science">
        <title>Structure of the large ribosomal subunit from human mitochondria.</title>
        <authorList>
            <person name="Brown A."/>
            <person name="Amunts A."/>
            <person name="Bai X.C."/>
            <person name="Sugimoto Y."/>
            <person name="Edwards P.C."/>
            <person name="Murshudov G."/>
            <person name="Scheres S.H."/>
            <person name="Ramakrishnan V."/>
        </authorList>
    </citation>
    <scope>STRUCTURE BY ELECTRON MICROSCOPY (3.40 ANGSTROMS)</scope>
    <scope>SUBCELLULAR LOCATION</scope>
    <scope>SUBUNIT</scope>
</reference>
<reference evidence="10" key="11">
    <citation type="journal article" date="2015" name="Science">
        <title>Ribosome. The structure of the human mitochondrial ribosome.</title>
        <authorList>
            <person name="Amunts A."/>
            <person name="Brown A."/>
            <person name="Toots J."/>
            <person name="Scheres S.H."/>
            <person name="Ramakrishnan V."/>
        </authorList>
    </citation>
    <scope>STRUCTURE BY ELECTRON MICROSCOPY (3.50 ANGSTROMS)</scope>
    <scope>SUBCELLULAR LOCATION</scope>
    <scope>SUBUNIT</scope>
</reference>
<reference evidence="11 12" key="12">
    <citation type="journal article" date="2017" name="Nat. Struct. Mol. Biol.">
        <title>Structures of the human mitochondrial ribosome in native states of assembly.</title>
        <authorList>
            <person name="Brown A."/>
            <person name="Rathore S."/>
            <person name="Kimanius D."/>
            <person name="Aibara S."/>
            <person name="Bai X.C."/>
            <person name="Rorbach J."/>
            <person name="Amunts A."/>
            <person name="Ramakrishnan V."/>
        </authorList>
    </citation>
    <scope>STRUCTURE BY ELECTRON MICROSCOPY (3.03 ANGSTROMS)</scope>
    <scope>SUBCELLULAR LOCATION</scope>
    <scope>SUBUNIT</scope>
</reference>
<accession>Q9Y3B7</accession>
<accession>A6NLT0</accession>
<accession>A8K219</accession>
<accession>Q32P46</accession>
<accession>Q96Q73</accession>
<organism>
    <name type="scientific">Homo sapiens</name>
    <name type="common">Human</name>
    <dbReference type="NCBI Taxonomy" id="9606"/>
    <lineage>
        <taxon>Eukaryota</taxon>
        <taxon>Metazoa</taxon>
        <taxon>Chordata</taxon>
        <taxon>Craniata</taxon>
        <taxon>Vertebrata</taxon>
        <taxon>Euteleostomi</taxon>
        <taxon>Mammalia</taxon>
        <taxon>Eutheria</taxon>
        <taxon>Euarchontoglires</taxon>
        <taxon>Primates</taxon>
        <taxon>Haplorrhini</taxon>
        <taxon>Catarrhini</taxon>
        <taxon>Hominidae</taxon>
        <taxon>Homo</taxon>
    </lineage>
</organism>